<protein>
    <recommendedName>
        <fullName evidence="1">Small ribosomal subunit biogenesis GTPase RsgA</fullName>
        <ecNumber evidence="1">3.6.1.-</ecNumber>
    </recommendedName>
</protein>
<sequence length="300" mass="32737">MSSNQAEGLIIAAHGRHYTVELADGSLRQCFPRGKKNGPAVGDRVRITPQGRDEGAIEAVLPRRNLLFRSDEMRVKQFAANVDQLLIVVAVEPTFADDLTGRSLAGAWSADIEPVIVLNKIDLPNGLDAARARLEPLRRLGVPVIELSAQDHAMVHERLAPRLAGRTSLLLGQSGMGKSTLLNTLVPHAQAATREYSAALDMGRHTTTSTRLYHLPEPGGDLIDSPGFQAFGLQHLNGEQILRGFPEFAPHIEHCRFYNCTHRHEPGCGVLAALQAGQIDAGRYALYLRILDENAAARPY</sequence>
<keyword id="KW-0963">Cytoplasm</keyword>
<keyword id="KW-0342">GTP-binding</keyword>
<keyword id="KW-0378">Hydrolase</keyword>
<keyword id="KW-0479">Metal-binding</keyword>
<keyword id="KW-0547">Nucleotide-binding</keyword>
<keyword id="KW-1185">Reference proteome</keyword>
<keyword id="KW-0690">Ribosome biogenesis</keyword>
<keyword id="KW-0694">RNA-binding</keyword>
<keyword id="KW-0699">rRNA-binding</keyword>
<keyword id="KW-0862">Zinc</keyword>
<gene>
    <name evidence="1" type="primary">rsgA</name>
    <name type="ordered locus">BP2689</name>
</gene>
<comment type="function">
    <text evidence="1">One of several proteins that assist in the late maturation steps of the functional core of the 30S ribosomal subunit. Helps release RbfA from mature subunits. May play a role in the assembly of ribosomal proteins into the subunit. Circularly permuted GTPase that catalyzes slow GTP hydrolysis, GTPase activity is stimulated by the 30S ribosomal subunit.</text>
</comment>
<comment type="cofactor">
    <cofactor evidence="1">
        <name>Zn(2+)</name>
        <dbReference type="ChEBI" id="CHEBI:29105"/>
    </cofactor>
    <text evidence="1">Binds 1 zinc ion per subunit.</text>
</comment>
<comment type="subunit">
    <text evidence="1">Monomer. Associates with 30S ribosomal subunit, binds 16S rRNA.</text>
</comment>
<comment type="subcellular location">
    <subcellularLocation>
        <location evidence="1">Cytoplasm</location>
    </subcellularLocation>
</comment>
<comment type="similarity">
    <text evidence="1">Belongs to the TRAFAC class YlqF/YawG GTPase family. RsgA subfamily.</text>
</comment>
<organism>
    <name type="scientific">Bordetella pertussis (strain Tohama I / ATCC BAA-589 / NCTC 13251)</name>
    <dbReference type="NCBI Taxonomy" id="257313"/>
    <lineage>
        <taxon>Bacteria</taxon>
        <taxon>Pseudomonadati</taxon>
        <taxon>Pseudomonadota</taxon>
        <taxon>Betaproteobacteria</taxon>
        <taxon>Burkholderiales</taxon>
        <taxon>Alcaligenaceae</taxon>
        <taxon>Bordetella</taxon>
    </lineage>
</organism>
<accession>P67678</accession>
<accession>Q7VVH5</accession>
<accession>Q7W9T6</accession>
<accession>Q7WGX1</accession>
<feature type="chain" id="PRO_0000171468" description="Small ribosomal subunit biogenesis GTPase RsgA">
    <location>
        <begin position="1"/>
        <end position="300"/>
    </location>
</feature>
<feature type="domain" description="CP-type G" evidence="2">
    <location>
        <begin position="69"/>
        <end position="231"/>
    </location>
</feature>
<feature type="binding site" evidence="1">
    <location>
        <begin position="119"/>
        <end position="122"/>
    </location>
    <ligand>
        <name>GTP</name>
        <dbReference type="ChEBI" id="CHEBI:37565"/>
    </ligand>
</feature>
<feature type="binding site" evidence="1">
    <location>
        <begin position="172"/>
        <end position="180"/>
    </location>
    <ligand>
        <name>GTP</name>
        <dbReference type="ChEBI" id="CHEBI:37565"/>
    </ligand>
</feature>
<feature type="binding site" evidence="1">
    <location>
        <position position="255"/>
    </location>
    <ligand>
        <name>Zn(2+)</name>
        <dbReference type="ChEBI" id="CHEBI:29105"/>
    </ligand>
</feature>
<feature type="binding site" evidence="1">
    <location>
        <position position="260"/>
    </location>
    <ligand>
        <name>Zn(2+)</name>
        <dbReference type="ChEBI" id="CHEBI:29105"/>
    </ligand>
</feature>
<feature type="binding site" evidence="1">
    <location>
        <position position="262"/>
    </location>
    <ligand>
        <name>Zn(2+)</name>
        <dbReference type="ChEBI" id="CHEBI:29105"/>
    </ligand>
</feature>
<feature type="binding site" evidence="1">
    <location>
        <position position="268"/>
    </location>
    <ligand>
        <name>Zn(2+)</name>
        <dbReference type="ChEBI" id="CHEBI:29105"/>
    </ligand>
</feature>
<proteinExistence type="inferred from homology"/>
<name>RSGA_BORPE</name>
<evidence type="ECO:0000255" key="1">
    <source>
        <dbReference type="HAMAP-Rule" id="MF_01820"/>
    </source>
</evidence>
<evidence type="ECO:0000255" key="2">
    <source>
        <dbReference type="PROSITE-ProRule" id="PRU01058"/>
    </source>
</evidence>
<dbReference type="EC" id="3.6.1.-" evidence="1"/>
<dbReference type="EMBL" id="BX640419">
    <property type="protein sequence ID" value="CAE42965.1"/>
    <property type="molecule type" value="Genomic_DNA"/>
</dbReference>
<dbReference type="RefSeq" id="NP_881301.1">
    <property type="nucleotide sequence ID" value="NC_002929.2"/>
</dbReference>
<dbReference type="RefSeq" id="WP_003813309.1">
    <property type="nucleotide sequence ID" value="NZ_CP039022.1"/>
</dbReference>
<dbReference type="SMR" id="P67678"/>
<dbReference type="STRING" id="257313.BP2689"/>
<dbReference type="PaxDb" id="257313-BP2689"/>
<dbReference type="GeneID" id="93203427"/>
<dbReference type="KEGG" id="bpe:BP2689"/>
<dbReference type="PATRIC" id="fig|257313.5.peg.2896"/>
<dbReference type="eggNOG" id="COG1162">
    <property type="taxonomic scope" value="Bacteria"/>
</dbReference>
<dbReference type="HOGENOM" id="CLU_033617_2_0_4"/>
<dbReference type="Proteomes" id="UP000002676">
    <property type="component" value="Chromosome"/>
</dbReference>
<dbReference type="GO" id="GO:0005737">
    <property type="term" value="C:cytoplasm"/>
    <property type="evidence" value="ECO:0007669"/>
    <property type="project" value="UniProtKB-SubCell"/>
</dbReference>
<dbReference type="GO" id="GO:0005525">
    <property type="term" value="F:GTP binding"/>
    <property type="evidence" value="ECO:0007669"/>
    <property type="project" value="UniProtKB-UniRule"/>
</dbReference>
<dbReference type="GO" id="GO:0003924">
    <property type="term" value="F:GTPase activity"/>
    <property type="evidence" value="ECO:0007669"/>
    <property type="project" value="UniProtKB-UniRule"/>
</dbReference>
<dbReference type="GO" id="GO:0046872">
    <property type="term" value="F:metal ion binding"/>
    <property type="evidence" value="ECO:0007669"/>
    <property type="project" value="UniProtKB-KW"/>
</dbReference>
<dbReference type="GO" id="GO:0019843">
    <property type="term" value="F:rRNA binding"/>
    <property type="evidence" value="ECO:0007669"/>
    <property type="project" value="UniProtKB-KW"/>
</dbReference>
<dbReference type="GO" id="GO:0042274">
    <property type="term" value="P:ribosomal small subunit biogenesis"/>
    <property type="evidence" value="ECO:0007669"/>
    <property type="project" value="UniProtKB-UniRule"/>
</dbReference>
<dbReference type="CDD" id="cd04466">
    <property type="entry name" value="S1_YloQ_GTPase"/>
    <property type="match status" value="1"/>
</dbReference>
<dbReference type="CDD" id="cd01854">
    <property type="entry name" value="YjeQ_EngC"/>
    <property type="match status" value="1"/>
</dbReference>
<dbReference type="Gene3D" id="2.40.50.140">
    <property type="entry name" value="Nucleic acid-binding proteins"/>
    <property type="match status" value="1"/>
</dbReference>
<dbReference type="Gene3D" id="3.40.50.300">
    <property type="entry name" value="P-loop containing nucleotide triphosphate hydrolases"/>
    <property type="match status" value="1"/>
</dbReference>
<dbReference type="Gene3D" id="1.10.40.50">
    <property type="entry name" value="Probable gtpase engc, domain 3"/>
    <property type="match status" value="1"/>
</dbReference>
<dbReference type="HAMAP" id="MF_01820">
    <property type="entry name" value="GTPase_RsgA"/>
    <property type="match status" value="1"/>
</dbReference>
<dbReference type="InterPro" id="IPR030378">
    <property type="entry name" value="G_CP_dom"/>
</dbReference>
<dbReference type="InterPro" id="IPR012340">
    <property type="entry name" value="NA-bd_OB-fold"/>
</dbReference>
<dbReference type="InterPro" id="IPR027417">
    <property type="entry name" value="P-loop_NTPase"/>
</dbReference>
<dbReference type="InterPro" id="IPR004881">
    <property type="entry name" value="Ribosome_biogen_GTPase_RsgA"/>
</dbReference>
<dbReference type="InterPro" id="IPR010914">
    <property type="entry name" value="RsgA_GTPase_dom"/>
</dbReference>
<dbReference type="InterPro" id="IPR031944">
    <property type="entry name" value="RsgA_N"/>
</dbReference>
<dbReference type="NCBIfam" id="TIGR00157">
    <property type="entry name" value="ribosome small subunit-dependent GTPase A"/>
    <property type="match status" value="1"/>
</dbReference>
<dbReference type="PANTHER" id="PTHR32120">
    <property type="entry name" value="SMALL RIBOSOMAL SUBUNIT BIOGENESIS GTPASE RSGA"/>
    <property type="match status" value="1"/>
</dbReference>
<dbReference type="PANTHER" id="PTHR32120:SF11">
    <property type="entry name" value="SMALL RIBOSOMAL SUBUNIT BIOGENESIS GTPASE RSGA 1, MITOCHONDRIAL-RELATED"/>
    <property type="match status" value="1"/>
</dbReference>
<dbReference type="Pfam" id="PF03193">
    <property type="entry name" value="RsgA_GTPase"/>
    <property type="match status" value="1"/>
</dbReference>
<dbReference type="SUPFAM" id="SSF50249">
    <property type="entry name" value="Nucleic acid-binding proteins"/>
    <property type="match status" value="1"/>
</dbReference>
<dbReference type="SUPFAM" id="SSF52540">
    <property type="entry name" value="P-loop containing nucleoside triphosphate hydrolases"/>
    <property type="match status" value="1"/>
</dbReference>
<dbReference type="PROSITE" id="PS50936">
    <property type="entry name" value="ENGC_GTPASE"/>
    <property type="match status" value="1"/>
</dbReference>
<dbReference type="PROSITE" id="PS51721">
    <property type="entry name" value="G_CP"/>
    <property type="match status" value="1"/>
</dbReference>
<reference key="1">
    <citation type="journal article" date="2003" name="Nat. Genet.">
        <title>Comparative analysis of the genome sequences of Bordetella pertussis, Bordetella parapertussis and Bordetella bronchiseptica.</title>
        <authorList>
            <person name="Parkhill J."/>
            <person name="Sebaihia M."/>
            <person name="Preston A."/>
            <person name="Murphy L.D."/>
            <person name="Thomson N.R."/>
            <person name="Harris D.E."/>
            <person name="Holden M.T.G."/>
            <person name="Churcher C.M."/>
            <person name="Bentley S.D."/>
            <person name="Mungall K.L."/>
            <person name="Cerdeno-Tarraga A.-M."/>
            <person name="Temple L."/>
            <person name="James K.D."/>
            <person name="Harris B."/>
            <person name="Quail M.A."/>
            <person name="Achtman M."/>
            <person name="Atkin R."/>
            <person name="Baker S."/>
            <person name="Basham D."/>
            <person name="Bason N."/>
            <person name="Cherevach I."/>
            <person name="Chillingworth T."/>
            <person name="Collins M."/>
            <person name="Cronin A."/>
            <person name="Davis P."/>
            <person name="Doggett J."/>
            <person name="Feltwell T."/>
            <person name="Goble A."/>
            <person name="Hamlin N."/>
            <person name="Hauser H."/>
            <person name="Holroyd S."/>
            <person name="Jagels K."/>
            <person name="Leather S."/>
            <person name="Moule S."/>
            <person name="Norberczak H."/>
            <person name="O'Neil S."/>
            <person name="Ormond D."/>
            <person name="Price C."/>
            <person name="Rabbinowitsch E."/>
            <person name="Rutter S."/>
            <person name="Sanders M."/>
            <person name="Saunders D."/>
            <person name="Seeger K."/>
            <person name="Sharp S."/>
            <person name="Simmonds M."/>
            <person name="Skelton J."/>
            <person name="Squares R."/>
            <person name="Squares S."/>
            <person name="Stevens K."/>
            <person name="Unwin L."/>
            <person name="Whitehead S."/>
            <person name="Barrell B.G."/>
            <person name="Maskell D.J."/>
        </authorList>
    </citation>
    <scope>NUCLEOTIDE SEQUENCE [LARGE SCALE GENOMIC DNA]</scope>
    <source>
        <strain>Tohama I / ATCC BAA-589 / NCTC 13251</strain>
    </source>
</reference>